<sequence>MANVSLRNVGKSYGDVHISKDINLEINEGEFVVFVGPSGCGKSTLLRMIAGLEDITTGELYIGEKLMNDVEPSKRGIGMVFQSYALYPHLDVADNMSFGLKLAGVKKNERDQRVNQVAEILQLAHLLDRKPKALSGGQRQRVAIGRTLVSQPEVFLLDEPLSNLDAALRVQMRVEISKLHKKLNRTMIYVTHDQVEAMTLADKIVVLNAGGVAQVGKPLELYHYPANRFVAGFIGSPKMNFLPVKVTAVEENQVKIELPDANHHNFWIPVSGEGVNIGENLSLGIRPEHLVPAEQAQVSLRGIVQVVELLGNETQIHLEIPEIKQPSLIYRQNDVILVNEGDEMNIGIVPERCHLFKEDGTACQRLFAEKGV</sequence>
<name>MALK_MANSM</name>
<gene>
    <name evidence="1" type="primary">malK</name>
    <name type="ordered locus">MS2067</name>
</gene>
<feature type="chain" id="PRO_0000273995" description="Maltose/maltodextrin import ATP-binding protein MalK">
    <location>
        <begin position="1"/>
        <end position="372"/>
    </location>
</feature>
<feature type="domain" description="ABC transporter" evidence="1">
    <location>
        <begin position="4"/>
        <end position="234"/>
    </location>
</feature>
<feature type="binding site" evidence="1">
    <location>
        <begin position="36"/>
        <end position="43"/>
    </location>
    <ligand>
        <name>ATP</name>
        <dbReference type="ChEBI" id="CHEBI:30616"/>
    </ligand>
</feature>
<protein>
    <recommendedName>
        <fullName evidence="1">Maltose/maltodextrin import ATP-binding protein MalK</fullName>
        <ecNumber evidence="1">7.5.2.1</ecNumber>
    </recommendedName>
</protein>
<reference key="1">
    <citation type="journal article" date="2004" name="Nat. Biotechnol.">
        <title>The genome sequence of the capnophilic rumen bacterium Mannheimia succiniciproducens.</title>
        <authorList>
            <person name="Hong S.H."/>
            <person name="Kim J.S."/>
            <person name="Lee S.Y."/>
            <person name="In Y.H."/>
            <person name="Choi S.S."/>
            <person name="Rih J.-K."/>
            <person name="Kim C.H."/>
            <person name="Jeong H."/>
            <person name="Hur C.G."/>
            <person name="Kim J.J."/>
        </authorList>
    </citation>
    <scope>NUCLEOTIDE SEQUENCE [LARGE SCALE GENOMIC DNA]</scope>
    <source>
        <strain>KCTC 0769BP / MBEL55E</strain>
    </source>
</reference>
<organism>
    <name type="scientific">Mannheimia succiniciproducens (strain KCTC 0769BP / MBEL55E)</name>
    <dbReference type="NCBI Taxonomy" id="221988"/>
    <lineage>
        <taxon>Bacteria</taxon>
        <taxon>Pseudomonadati</taxon>
        <taxon>Pseudomonadota</taxon>
        <taxon>Gammaproteobacteria</taxon>
        <taxon>Pasteurellales</taxon>
        <taxon>Pasteurellaceae</taxon>
        <taxon>Basfia</taxon>
    </lineage>
</organism>
<dbReference type="EC" id="7.5.2.1" evidence="1"/>
<dbReference type="EMBL" id="AE016827">
    <property type="protein sequence ID" value="AAU38674.1"/>
    <property type="molecule type" value="Genomic_DNA"/>
</dbReference>
<dbReference type="RefSeq" id="WP_011201222.1">
    <property type="nucleotide sequence ID" value="NC_006300.1"/>
</dbReference>
<dbReference type="SMR" id="Q65QT6"/>
<dbReference type="STRING" id="221988.MS2067"/>
<dbReference type="KEGG" id="msu:MS2067"/>
<dbReference type="eggNOG" id="COG3842">
    <property type="taxonomic scope" value="Bacteria"/>
</dbReference>
<dbReference type="HOGENOM" id="CLU_000604_1_1_6"/>
<dbReference type="OrthoDB" id="9802264at2"/>
<dbReference type="Proteomes" id="UP000000607">
    <property type="component" value="Chromosome"/>
</dbReference>
<dbReference type="GO" id="GO:0055052">
    <property type="term" value="C:ATP-binding cassette (ABC) transporter complex, substrate-binding subunit-containing"/>
    <property type="evidence" value="ECO:0007669"/>
    <property type="project" value="TreeGrafter"/>
</dbReference>
<dbReference type="GO" id="GO:1990060">
    <property type="term" value="C:maltose transport complex"/>
    <property type="evidence" value="ECO:0007669"/>
    <property type="project" value="TreeGrafter"/>
</dbReference>
<dbReference type="GO" id="GO:0015423">
    <property type="term" value="F:ABC-type maltose transporter activity"/>
    <property type="evidence" value="ECO:0007669"/>
    <property type="project" value="UniProtKB-EC"/>
</dbReference>
<dbReference type="GO" id="GO:0005524">
    <property type="term" value="F:ATP binding"/>
    <property type="evidence" value="ECO:0007669"/>
    <property type="project" value="UniProtKB-KW"/>
</dbReference>
<dbReference type="GO" id="GO:0016887">
    <property type="term" value="F:ATP hydrolysis activity"/>
    <property type="evidence" value="ECO:0007669"/>
    <property type="project" value="InterPro"/>
</dbReference>
<dbReference type="CDD" id="cd03301">
    <property type="entry name" value="ABC_MalK_N"/>
    <property type="match status" value="1"/>
</dbReference>
<dbReference type="FunFam" id="3.40.50.300:FF:000042">
    <property type="entry name" value="Maltose/maltodextrin ABC transporter, ATP-binding protein"/>
    <property type="match status" value="1"/>
</dbReference>
<dbReference type="FunFam" id="2.40.50.100:FF:000014">
    <property type="entry name" value="Maltose/maltodextrin import ATP-binding protein MalK"/>
    <property type="match status" value="1"/>
</dbReference>
<dbReference type="Gene3D" id="2.40.50.100">
    <property type="match status" value="1"/>
</dbReference>
<dbReference type="Gene3D" id="2.40.50.140">
    <property type="entry name" value="Nucleic acid-binding proteins"/>
    <property type="match status" value="1"/>
</dbReference>
<dbReference type="Gene3D" id="3.40.50.300">
    <property type="entry name" value="P-loop containing nucleotide triphosphate hydrolases"/>
    <property type="match status" value="1"/>
</dbReference>
<dbReference type="InterPro" id="IPR003593">
    <property type="entry name" value="AAA+_ATPase"/>
</dbReference>
<dbReference type="InterPro" id="IPR003439">
    <property type="entry name" value="ABC_transporter-like_ATP-bd"/>
</dbReference>
<dbReference type="InterPro" id="IPR017871">
    <property type="entry name" value="ABC_transporter-like_CS"/>
</dbReference>
<dbReference type="InterPro" id="IPR015855">
    <property type="entry name" value="ABC_transpr_MalK-like"/>
</dbReference>
<dbReference type="InterPro" id="IPR047641">
    <property type="entry name" value="ABC_transpr_MalK/UgpC-like"/>
</dbReference>
<dbReference type="InterPro" id="IPR008995">
    <property type="entry name" value="Mo/tungstate-bd_C_term_dom"/>
</dbReference>
<dbReference type="InterPro" id="IPR012340">
    <property type="entry name" value="NA-bd_OB-fold"/>
</dbReference>
<dbReference type="InterPro" id="IPR040582">
    <property type="entry name" value="OB_MalK-like"/>
</dbReference>
<dbReference type="InterPro" id="IPR027417">
    <property type="entry name" value="P-loop_NTPase"/>
</dbReference>
<dbReference type="NCBIfam" id="NF008233">
    <property type="entry name" value="PRK11000.1"/>
    <property type="match status" value="1"/>
</dbReference>
<dbReference type="NCBIfam" id="NF008653">
    <property type="entry name" value="PRK11650.1"/>
    <property type="match status" value="1"/>
</dbReference>
<dbReference type="PANTHER" id="PTHR43875">
    <property type="entry name" value="MALTODEXTRIN IMPORT ATP-BINDING PROTEIN MSMX"/>
    <property type="match status" value="1"/>
</dbReference>
<dbReference type="PANTHER" id="PTHR43875:SF3">
    <property type="entry name" value="MALTOSE_MALTODEXTRIN IMPORT ATP-BINDING PROTEIN MALK"/>
    <property type="match status" value="1"/>
</dbReference>
<dbReference type="Pfam" id="PF00005">
    <property type="entry name" value="ABC_tran"/>
    <property type="match status" value="1"/>
</dbReference>
<dbReference type="Pfam" id="PF17912">
    <property type="entry name" value="OB_MalK"/>
    <property type="match status" value="1"/>
</dbReference>
<dbReference type="SMART" id="SM00382">
    <property type="entry name" value="AAA"/>
    <property type="match status" value="1"/>
</dbReference>
<dbReference type="SUPFAM" id="SSF50331">
    <property type="entry name" value="MOP-like"/>
    <property type="match status" value="1"/>
</dbReference>
<dbReference type="SUPFAM" id="SSF52540">
    <property type="entry name" value="P-loop containing nucleoside triphosphate hydrolases"/>
    <property type="match status" value="1"/>
</dbReference>
<dbReference type="PROSITE" id="PS00211">
    <property type="entry name" value="ABC_TRANSPORTER_1"/>
    <property type="match status" value="1"/>
</dbReference>
<dbReference type="PROSITE" id="PS50893">
    <property type="entry name" value="ABC_TRANSPORTER_2"/>
    <property type="match status" value="1"/>
</dbReference>
<dbReference type="PROSITE" id="PS51245">
    <property type="entry name" value="MALK"/>
    <property type="match status" value="1"/>
</dbReference>
<accession>Q65QT6</accession>
<evidence type="ECO:0000255" key="1">
    <source>
        <dbReference type="HAMAP-Rule" id="MF_01709"/>
    </source>
</evidence>
<keyword id="KW-0067">ATP-binding</keyword>
<keyword id="KW-0997">Cell inner membrane</keyword>
<keyword id="KW-1003">Cell membrane</keyword>
<keyword id="KW-0472">Membrane</keyword>
<keyword id="KW-0547">Nucleotide-binding</keyword>
<keyword id="KW-0762">Sugar transport</keyword>
<keyword id="KW-1278">Translocase</keyword>
<keyword id="KW-0813">Transport</keyword>
<proteinExistence type="inferred from homology"/>
<comment type="function">
    <text evidence="1">Part of the ABC transporter complex MalEFGK involved in maltose/maltodextrin import. Responsible for energy coupling to the transport system.</text>
</comment>
<comment type="catalytic activity">
    <reaction evidence="1">
        <text>D-maltose(out) + ATP + H2O = D-maltose(in) + ADP + phosphate + H(+)</text>
        <dbReference type="Rhea" id="RHEA:22132"/>
        <dbReference type="ChEBI" id="CHEBI:15377"/>
        <dbReference type="ChEBI" id="CHEBI:15378"/>
        <dbReference type="ChEBI" id="CHEBI:17306"/>
        <dbReference type="ChEBI" id="CHEBI:30616"/>
        <dbReference type="ChEBI" id="CHEBI:43474"/>
        <dbReference type="ChEBI" id="CHEBI:456216"/>
        <dbReference type="EC" id="7.5.2.1"/>
    </reaction>
</comment>
<comment type="subunit">
    <text evidence="1">The complex is composed of two ATP-binding proteins (MalK), two transmembrane proteins (MalG and MalK) and a solute-binding protein (MalE).</text>
</comment>
<comment type="subcellular location">
    <subcellularLocation>
        <location evidence="1">Cell inner membrane</location>
        <topology evidence="1">Peripheral membrane protein</topology>
    </subcellularLocation>
</comment>
<comment type="similarity">
    <text evidence="1">Belongs to the ABC transporter superfamily. Maltooligosaccharide importer (TC 3.A.1.1.1) family.</text>
</comment>